<keyword id="KW-0113">Calvin cycle</keyword>
<keyword id="KW-0120">Carbon dioxide fixation</keyword>
<keyword id="KW-0150">Chloroplast</keyword>
<keyword id="KW-0601">Photorespiration</keyword>
<keyword id="KW-0602">Photosynthesis</keyword>
<keyword id="KW-0934">Plastid</keyword>
<keyword id="KW-0809">Transit peptide</keyword>
<gene>
    <name evidence="1" type="primary">RBCS2</name>
</gene>
<name>RBS2_FRIAG</name>
<accession>O22572</accession>
<proteinExistence type="evidence at transcript level"/>
<organism>
    <name type="scientific">Fritillaria agrestis</name>
    <name type="common">Stinkbells</name>
    <dbReference type="NCBI Taxonomy" id="64177"/>
    <lineage>
        <taxon>Eukaryota</taxon>
        <taxon>Viridiplantae</taxon>
        <taxon>Streptophyta</taxon>
        <taxon>Embryophyta</taxon>
        <taxon>Tracheophyta</taxon>
        <taxon>Spermatophyta</taxon>
        <taxon>Magnoliopsida</taxon>
        <taxon>Liliopsida</taxon>
        <taxon>Liliales</taxon>
        <taxon>Liliaceae</taxon>
        <taxon>Fritillaria</taxon>
    </lineage>
</organism>
<protein>
    <recommendedName>
        <fullName evidence="1">Ribulose bisphosphate carboxylase small subunit, chloroplastic 2</fullName>
        <shortName evidence="1">RuBisCO small subunit 2</shortName>
    </recommendedName>
</protein>
<comment type="function">
    <text evidence="1">RuBisCO catalyzes two reactions: the carboxylation of D-ribulose 1,5-bisphosphate, the primary event in carbon dioxide fixation, as well as the oxidative fragmentation of the pentose substrate. Both reactions occur simultaneously and in competition at the same active site. Although the small subunit is not catalytic it is essential for maximal activity.</text>
</comment>
<comment type="subunit">
    <text evidence="1">Heterohexadecamer of 8 large and 8 small subunits.</text>
</comment>
<comment type="subcellular location">
    <subcellularLocation>
        <location evidence="1">Plastid</location>
        <location evidence="1">Chloroplast</location>
    </subcellularLocation>
</comment>
<comment type="miscellaneous">
    <text evidence="1">The basic functional RuBisCO is composed of a large chain homodimer in a 'head-to-tail' conformation. In form I RuBisCO this homodimer is arranged in a barrel-like tetramer with the small subunits forming a tetrameric 'cap' on each end of the 'barrel'.</text>
</comment>
<comment type="similarity">
    <text evidence="1">Belongs to the RuBisCO small chain family.</text>
</comment>
<evidence type="ECO:0000255" key="1">
    <source>
        <dbReference type="HAMAP-Rule" id="MF_00860"/>
    </source>
</evidence>
<sequence length="179" mass="19622">MASSATMLSSVATAACVAPAQASMVAPFVGLKSASAFPVTQKTVTGLSTLPSNGGRVQCMKVWPIVGLKKFETLSYLPTLSVESLLKQIEYLIRNGWVPCLEFSLEGFVSRDNNKSPGYYDGRYWTMWKLPMFGCTDAAQVVKEAAECKKEYPAAFIRVIGFDNVRQVQCVSFIVEKPE</sequence>
<dbReference type="EMBL" id="AF024573">
    <property type="protein sequence ID" value="AAB84180.1"/>
    <property type="molecule type" value="mRNA"/>
</dbReference>
<dbReference type="SMR" id="O22572"/>
<dbReference type="GO" id="GO:0009507">
    <property type="term" value="C:chloroplast"/>
    <property type="evidence" value="ECO:0007669"/>
    <property type="project" value="UniProtKB-SubCell"/>
</dbReference>
<dbReference type="GO" id="GO:0016984">
    <property type="term" value="F:ribulose-bisphosphate carboxylase activity"/>
    <property type="evidence" value="ECO:0007669"/>
    <property type="project" value="UniProtKB-UniRule"/>
</dbReference>
<dbReference type="GO" id="GO:0009853">
    <property type="term" value="P:photorespiration"/>
    <property type="evidence" value="ECO:0007669"/>
    <property type="project" value="UniProtKB-KW"/>
</dbReference>
<dbReference type="GO" id="GO:0019253">
    <property type="term" value="P:reductive pentose-phosphate cycle"/>
    <property type="evidence" value="ECO:0007669"/>
    <property type="project" value="UniProtKB-UniRule"/>
</dbReference>
<dbReference type="CDD" id="cd03527">
    <property type="entry name" value="RuBisCO_small"/>
    <property type="match status" value="1"/>
</dbReference>
<dbReference type="FunFam" id="3.30.190.10:FF:000001">
    <property type="entry name" value="Ribulose bisphosphate carboxylase small chain, chloroplastic"/>
    <property type="match status" value="1"/>
</dbReference>
<dbReference type="Gene3D" id="3.30.190.10">
    <property type="entry name" value="Ribulose bisphosphate carboxylase, small subunit"/>
    <property type="match status" value="1"/>
</dbReference>
<dbReference type="HAMAP" id="MF_00859">
    <property type="entry name" value="RuBisCO_S_bact"/>
    <property type="match status" value="1"/>
</dbReference>
<dbReference type="InterPro" id="IPR024681">
    <property type="entry name" value="RuBisCO_ssu"/>
</dbReference>
<dbReference type="InterPro" id="IPR000894">
    <property type="entry name" value="RuBisCO_ssu_dom"/>
</dbReference>
<dbReference type="InterPro" id="IPR024680">
    <property type="entry name" value="RuBisCO_ssu_N"/>
</dbReference>
<dbReference type="InterPro" id="IPR036385">
    <property type="entry name" value="RuBisCO_ssu_sf"/>
</dbReference>
<dbReference type="PANTHER" id="PTHR31262">
    <property type="entry name" value="RIBULOSE BISPHOSPHATE CARBOXYLASE SMALL CHAIN 1, CHLOROPLASTIC"/>
    <property type="match status" value="1"/>
</dbReference>
<dbReference type="PANTHER" id="PTHR31262:SF10">
    <property type="entry name" value="RIBULOSE BISPHOSPHATE CARBOXYLASE SMALL SUBUNIT 1A, CHLOROPLASTIC-RELATED"/>
    <property type="match status" value="1"/>
</dbReference>
<dbReference type="Pfam" id="PF12338">
    <property type="entry name" value="RbcS"/>
    <property type="match status" value="1"/>
</dbReference>
<dbReference type="Pfam" id="PF00101">
    <property type="entry name" value="RuBisCO_small"/>
    <property type="match status" value="1"/>
</dbReference>
<dbReference type="PRINTS" id="PR00152">
    <property type="entry name" value="RUBISCOSMALL"/>
</dbReference>
<dbReference type="SMART" id="SM00961">
    <property type="entry name" value="RuBisCO_small"/>
    <property type="match status" value="1"/>
</dbReference>
<dbReference type="SUPFAM" id="SSF55239">
    <property type="entry name" value="RuBisCO, small subunit"/>
    <property type="match status" value="1"/>
</dbReference>
<feature type="transit peptide" description="Chloroplast" evidence="1">
    <location>
        <begin position="1"/>
        <end position="58"/>
    </location>
</feature>
<feature type="chain" id="PRO_0000031501" description="Ribulose bisphosphate carboxylase small subunit, chloroplastic 2" evidence="1">
    <location>
        <begin position="59"/>
        <end position="179"/>
    </location>
</feature>
<reference key="1">
    <citation type="submission" date="1997-09" db="EMBL/GenBank/DDBJ databases">
        <authorList>
            <person name="Panico E."/>
            <person name="Baysdorfer C."/>
        </authorList>
    </citation>
    <scope>NUCLEOTIDE SEQUENCE [MRNA]</scope>
</reference>